<proteinExistence type="inferred from homology"/>
<protein>
    <recommendedName>
        <fullName evidence="1">Nucleotide-binding protein OB2468</fullName>
    </recommendedName>
</protein>
<reference key="1">
    <citation type="journal article" date="2002" name="Nucleic Acids Res.">
        <title>Genome sequence of Oceanobacillus iheyensis isolated from the Iheya Ridge and its unexpected adaptive capabilities to extreme environments.</title>
        <authorList>
            <person name="Takami H."/>
            <person name="Takaki Y."/>
            <person name="Uchiyama I."/>
        </authorList>
    </citation>
    <scope>NUCLEOTIDE SEQUENCE [LARGE SCALE GENOMIC DNA]</scope>
    <source>
        <strain>DSM 14371 / CIP 107618 / JCM 11309 / KCTC 3954 / HTE831</strain>
    </source>
</reference>
<comment type="function">
    <text evidence="1">Displays ATPase and GTPase activities.</text>
</comment>
<comment type="similarity">
    <text evidence="1">Belongs to the RapZ-like family.</text>
</comment>
<sequence length="293" mass="33421">MNQEQETKLVIITGMSGAGKTVAIQSFEDLGYYCVDNLPPALLPKFLDLMKDATNNIQKVALVMDLRGREFFDSLFEALDVLAKENWLEDHILFLDAKDEALVTRYKETRRSHPLATDGLPLDGIKQEREILDELRGRAQRIIDTTSLKPRNLREKILKVYKEEKQEVFSVHFVSFGFKYGLPIDADLVFDVRFLPNPHYVSNLQPLTGLNPDVSSYVFKWSDTQTFIDKVTDLLTFMLPQYKKEGKSQLVVAIGCTGGQHRSVALAEHFSKVLSNGYTTHVSHRDIDKRKVL</sequence>
<keyword id="KW-0067">ATP-binding</keyword>
<keyword id="KW-0342">GTP-binding</keyword>
<keyword id="KW-0547">Nucleotide-binding</keyword>
<keyword id="KW-1185">Reference proteome</keyword>
<dbReference type="EMBL" id="BA000028">
    <property type="protein sequence ID" value="BAC14424.1"/>
    <property type="molecule type" value="Genomic_DNA"/>
</dbReference>
<dbReference type="RefSeq" id="WP_011066861.1">
    <property type="nucleotide sequence ID" value="NC_004193.1"/>
</dbReference>
<dbReference type="SMR" id="Q8ENL3"/>
<dbReference type="STRING" id="221109.gene:10734720"/>
<dbReference type="KEGG" id="oih:OB2468"/>
<dbReference type="eggNOG" id="COG1660">
    <property type="taxonomic scope" value="Bacteria"/>
</dbReference>
<dbReference type="HOGENOM" id="CLU_059558_0_0_9"/>
<dbReference type="OrthoDB" id="9784461at2"/>
<dbReference type="PhylomeDB" id="Q8ENL3"/>
<dbReference type="Proteomes" id="UP000000822">
    <property type="component" value="Chromosome"/>
</dbReference>
<dbReference type="GO" id="GO:0005524">
    <property type="term" value="F:ATP binding"/>
    <property type="evidence" value="ECO:0007669"/>
    <property type="project" value="UniProtKB-UniRule"/>
</dbReference>
<dbReference type="GO" id="GO:0005525">
    <property type="term" value="F:GTP binding"/>
    <property type="evidence" value="ECO:0007669"/>
    <property type="project" value="UniProtKB-UniRule"/>
</dbReference>
<dbReference type="Gene3D" id="3.40.50.300">
    <property type="entry name" value="P-loop containing nucleotide triphosphate hydrolases"/>
    <property type="match status" value="1"/>
</dbReference>
<dbReference type="HAMAP" id="MF_00636">
    <property type="entry name" value="RapZ_like"/>
    <property type="match status" value="1"/>
</dbReference>
<dbReference type="InterPro" id="IPR027417">
    <property type="entry name" value="P-loop_NTPase"/>
</dbReference>
<dbReference type="InterPro" id="IPR005337">
    <property type="entry name" value="RapZ-like"/>
</dbReference>
<dbReference type="InterPro" id="IPR053930">
    <property type="entry name" value="RapZ-like_N"/>
</dbReference>
<dbReference type="InterPro" id="IPR053931">
    <property type="entry name" value="RapZ_C"/>
</dbReference>
<dbReference type="NCBIfam" id="NF003828">
    <property type="entry name" value="PRK05416.1"/>
    <property type="match status" value="1"/>
</dbReference>
<dbReference type="PANTHER" id="PTHR30448">
    <property type="entry name" value="RNASE ADAPTER PROTEIN RAPZ"/>
    <property type="match status" value="1"/>
</dbReference>
<dbReference type="PANTHER" id="PTHR30448:SF0">
    <property type="entry name" value="RNASE ADAPTER PROTEIN RAPZ"/>
    <property type="match status" value="1"/>
</dbReference>
<dbReference type="Pfam" id="PF22740">
    <property type="entry name" value="PapZ_C"/>
    <property type="match status" value="1"/>
</dbReference>
<dbReference type="Pfam" id="PF03668">
    <property type="entry name" value="RapZ-like_N"/>
    <property type="match status" value="1"/>
</dbReference>
<dbReference type="PIRSF" id="PIRSF005052">
    <property type="entry name" value="P-loopkin"/>
    <property type="match status" value="1"/>
</dbReference>
<dbReference type="SUPFAM" id="SSF52540">
    <property type="entry name" value="P-loop containing nucleoside triphosphate hydrolases"/>
    <property type="match status" value="1"/>
</dbReference>
<name>Y2468_OCEIH</name>
<feature type="chain" id="PRO_0000107738" description="Nucleotide-binding protein OB2468">
    <location>
        <begin position="1"/>
        <end position="293"/>
    </location>
</feature>
<feature type="binding site" evidence="1">
    <location>
        <begin position="14"/>
        <end position="21"/>
    </location>
    <ligand>
        <name>ATP</name>
        <dbReference type="ChEBI" id="CHEBI:30616"/>
    </ligand>
</feature>
<feature type="binding site" evidence="1">
    <location>
        <begin position="65"/>
        <end position="68"/>
    </location>
    <ligand>
        <name>GTP</name>
        <dbReference type="ChEBI" id="CHEBI:37565"/>
    </ligand>
</feature>
<organism>
    <name type="scientific">Oceanobacillus iheyensis (strain DSM 14371 / CIP 107618 / JCM 11309 / KCTC 3954 / HTE831)</name>
    <dbReference type="NCBI Taxonomy" id="221109"/>
    <lineage>
        <taxon>Bacteria</taxon>
        <taxon>Bacillati</taxon>
        <taxon>Bacillota</taxon>
        <taxon>Bacilli</taxon>
        <taxon>Bacillales</taxon>
        <taxon>Bacillaceae</taxon>
        <taxon>Oceanobacillus</taxon>
    </lineage>
</organism>
<gene>
    <name type="ordered locus">OB2468</name>
</gene>
<accession>Q8ENL3</accession>
<evidence type="ECO:0000255" key="1">
    <source>
        <dbReference type="HAMAP-Rule" id="MF_00636"/>
    </source>
</evidence>